<accession>Q92IV6</accession>
<gene>
    <name type="ordered locus">RC0314</name>
</gene>
<protein>
    <recommendedName>
        <fullName>Uncharacterized protein RC0314</fullName>
    </recommendedName>
</protein>
<dbReference type="EMBL" id="AE006914">
    <property type="protein sequence ID" value="AAL02852.1"/>
    <property type="molecule type" value="Genomic_DNA"/>
</dbReference>
<dbReference type="PIR" id="B97739">
    <property type="entry name" value="B97739"/>
</dbReference>
<dbReference type="RefSeq" id="WP_010976973.1">
    <property type="nucleotide sequence ID" value="NC_003103.1"/>
</dbReference>
<dbReference type="SMR" id="Q92IV6"/>
<dbReference type="GeneID" id="927497"/>
<dbReference type="KEGG" id="rco:RC0314"/>
<dbReference type="PATRIC" id="fig|272944.4.peg.359"/>
<dbReference type="HOGENOM" id="CLU_655334_0_0_5"/>
<dbReference type="Proteomes" id="UP000000816">
    <property type="component" value="Chromosome"/>
</dbReference>
<dbReference type="CDD" id="cd10276">
    <property type="entry name" value="BamB_YfgL"/>
    <property type="match status" value="1"/>
</dbReference>
<dbReference type="Gene3D" id="2.130.10.10">
    <property type="entry name" value="YVTN repeat-like/Quinoprotein amine dehydrogenase"/>
    <property type="match status" value="1"/>
</dbReference>
<dbReference type="InterPro" id="IPR018391">
    <property type="entry name" value="PQQ_b-propeller_rpt"/>
</dbReference>
<dbReference type="InterPro" id="IPR002372">
    <property type="entry name" value="PQQ_rpt_dom"/>
</dbReference>
<dbReference type="InterPro" id="IPR011047">
    <property type="entry name" value="Quinoprotein_ADH-like_sf"/>
</dbReference>
<dbReference type="InterPro" id="IPR015943">
    <property type="entry name" value="WD40/YVTN_repeat-like_dom_sf"/>
</dbReference>
<dbReference type="PANTHER" id="PTHR34512">
    <property type="entry name" value="CELL SURFACE PROTEIN"/>
    <property type="match status" value="1"/>
</dbReference>
<dbReference type="PANTHER" id="PTHR34512:SF30">
    <property type="entry name" value="OUTER MEMBRANE PROTEIN ASSEMBLY FACTOR BAMB"/>
    <property type="match status" value="1"/>
</dbReference>
<dbReference type="Pfam" id="PF13360">
    <property type="entry name" value="PQQ_2"/>
    <property type="match status" value="1"/>
</dbReference>
<dbReference type="SMART" id="SM00564">
    <property type="entry name" value="PQQ"/>
    <property type="match status" value="6"/>
</dbReference>
<dbReference type="SUPFAM" id="SSF50998">
    <property type="entry name" value="Quinoprotein alcohol dehydrogenase-like"/>
    <property type="match status" value="1"/>
</dbReference>
<name>Y314_RICCN</name>
<organism>
    <name type="scientific">Rickettsia conorii (strain ATCC VR-613 / Malish 7)</name>
    <dbReference type="NCBI Taxonomy" id="272944"/>
    <lineage>
        <taxon>Bacteria</taxon>
        <taxon>Pseudomonadati</taxon>
        <taxon>Pseudomonadota</taxon>
        <taxon>Alphaproteobacteria</taxon>
        <taxon>Rickettsiales</taxon>
        <taxon>Rickettsiaceae</taxon>
        <taxon>Rickettsieae</taxon>
        <taxon>Rickettsia</taxon>
        <taxon>spotted fever group</taxon>
    </lineage>
</organism>
<feature type="chain" id="PRO_0000101338" description="Uncharacterized protein RC0314">
    <location>
        <begin position="1"/>
        <end position="414"/>
    </location>
</feature>
<sequence>MTKKIALLLLPFILISCNGLGPKRVKNIVELTPKLAIQTHEPIYLDSNANIYAFNANMLKNKQYSFARSKTITEPVFIGDMIYALDIRSNISAFSIEKNKIIWSYNLSRHKKDNYIGGGILHHNGKLYVTYGSRLLVVLDAKSGYEIIRKELPDIIRIKPIVLNDNTVLVQTISNQTIALNAETLKTVWEHESLAEVLSASYFMTPIVQYDNVIVTYNSGQILALNITNGEVKWNFEFTNLNDRTAIPNFDESSILCTPVHDNMNLYIATGLGKLIKLNVATGSVIWQVNAEDIQSMSLIGNSLFVTNNARQIAAFNPETGKVKFVADLNDGQDPKKLKSAAFLVPFVGVNNNNKRSLNVISVNGVLYSFDVDNNGLNMIPHVVKIIKNIRYYGLSANNNLYFSTDSKIIFGSK</sequence>
<reference key="1">
    <citation type="journal article" date="2001" name="Science">
        <title>Mechanisms of evolution in Rickettsia conorii and R. prowazekii.</title>
        <authorList>
            <person name="Ogata H."/>
            <person name="Audic S."/>
            <person name="Renesto-Audiffren P."/>
            <person name="Fournier P.-E."/>
            <person name="Barbe V."/>
            <person name="Samson D."/>
            <person name="Roux V."/>
            <person name="Cossart P."/>
            <person name="Weissenbach J."/>
            <person name="Claverie J.-M."/>
            <person name="Raoult D."/>
        </authorList>
    </citation>
    <scope>NUCLEOTIDE SEQUENCE [LARGE SCALE GENOMIC DNA]</scope>
    <source>
        <strain>ATCC VR-613 / Malish 7</strain>
    </source>
</reference>
<proteinExistence type="predicted"/>